<evidence type="ECO:0000255" key="1">
    <source>
        <dbReference type="HAMAP-Rule" id="MF_01302"/>
    </source>
</evidence>
<evidence type="ECO:0000305" key="2"/>
<reference key="1">
    <citation type="journal article" date="2009" name="Appl. Environ. Microbiol.">
        <title>Three genomes from the phylum Acidobacteria provide insight into the lifestyles of these microorganisms in soils.</title>
        <authorList>
            <person name="Ward N.L."/>
            <person name="Challacombe J.F."/>
            <person name="Janssen P.H."/>
            <person name="Henrissat B."/>
            <person name="Coutinho P.M."/>
            <person name="Wu M."/>
            <person name="Xie G."/>
            <person name="Haft D.H."/>
            <person name="Sait M."/>
            <person name="Badger J."/>
            <person name="Barabote R.D."/>
            <person name="Bradley B."/>
            <person name="Brettin T.S."/>
            <person name="Brinkac L.M."/>
            <person name="Bruce D."/>
            <person name="Creasy T."/>
            <person name="Daugherty S.C."/>
            <person name="Davidsen T.M."/>
            <person name="DeBoy R.T."/>
            <person name="Detter J.C."/>
            <person name="Dodson R.J."/>
            <person name="Durkin A.S."/>
            <person name="Ganapathy A."/>
            <person name="Gwinn-Giglio M."/>
            <person name="Han C.S."/>
            <person name="Khouri H."/>
            <person name="Kiss H."/>
            <person name="Kothari S.P."/>
            <person name="Madupu R."/>
            <person name="Nelson K.E."/>
            <person name="Nelson W.C."/>
            <person name="Paulsen I."/>
            <person name="Penn K."/>
            <person name="Ren Q."/>
            <person name="Rosovitz M.J."/>
            <person name="Selengut J.D."/>
            <person name="Shrivastava S."/>
            <person name="Sullivan S.A."/>
            <person name="Tapia R."/>
            <person name="Thompson L.S."/>
            <person name="Watkins K.L."/>
            <person name="Yang Q."/>
            <person name="Yu C."/>
            <person name="Zafar N."/>
            <person name="Zhou L."/>
            <person name="Kuske C.R."/>
        </authorList>
    </citation>
    <scope>NUCLEOTIDE SEQUENCE [LARGE SCALE GENOMIC DNA]</scope>
    <source>
        <strain>ATCC 51196 / DSM 11244 / BCRC 80197 / JCM 7670 / NBRC 15755 / NCIMB 13165 / 161</strain>
    </source>
</reference>
<keyword id="KW-1185">Reference proteome</keyword>
<keyword id="KW-0687">Ribonucleoprotein</keyword>
<keyword id="KW-0689">Ribosomal protein</keyword>
<keyword id="KW-0694">RNA-binding</keyword>
<keyword id="KW-0699">rRNA-binding</keyword>
<accession>C1F628</accession>
<feature type="chain" id="PRO_1000165297" description="Small ribosomal subunit protein uS8">
    <location>
        <begin position="1"/>
        <end position="132"/>
    </location>
</feature>
<proteinExistence type="inferred from homology"/>
<gene>
    <name evidence="1" type="primary">rpsH</name>
    <name type="ordered locus">ACP_1437</name>
</gene>
<dbReference type="EMBL" id="CP001472">
    <property type="protein sequence ID" value="ACO31784.1"/>
    <property type="molecule type" value="Genomic_DNA"/>
</dbReference>
<dbReference type="RefSeq" id="WP_015896570.1">
    <property type="nucleotide sequence ID" value="NC_012483.1"/>
</dbReference>
<dbReference type="SMR" id="C1F628"/>
<dbReference type="FunCoup" id="C1F628">
    <property type="interactions" value="529"/>
</dbReference>
<dbReference type="STRING" id="240015.ACP_1437"/>
<dbReference type="KEGG" id="aca:ACP_1437"/>
<dbReference type="eggNOG" id="COG0096">
    <property type="taxonomic scope" value="Bacteria"/>
</dbReference>
<dbReference type="HOGENOM" id="CLU_098428_0_2_0"/>
<dbReference type="InParanoid" id="C1F628"/>
<dbReference type="OrthoDB" id="9802617at2"/>
<dbReference type="Proteomes" id="UP000002207">
    <property type="component" value="Chromosome"/>
</dbReference>
<dbReference type="GO" id="GO:1990904">
    <property type="term" value="C:ribonucleoprotein complex"/>
    <property type="evidence" value="ECO:0007669"/>
    <property type="project" value="UniProtKB-KW"/>
</dbReference>
<dbReference type="GO" id="GO:0005840">
    <property type="term" value="C:ribosome"/>
    <property type="evidence" value="ECO:0007669"/>
    <property type="project" value="UniProtKB-KW"/>
</dbReference>
<dbReference type="GO" id="GO:0019843">
    <property type="term" value="F:rRNA binding"/>
    <property type="evidence" value="ECO:0007669"/>
    <property type="project" value="UniProtKB-UniRule"/>
</dbReference>
<dbReference type="GO" id="GO:0003735">
    <property type="term" value="F:structural constituent of ribosome"/>
    <property type="evidence" value="ECO:0007669"/>
    <property type="project" value="InterPro"/>
</dbReference>
<dbReference type="GO" id="GO:0006412">
    <property type="term" value="P:translation"/>
    <property type="evidence" value="ECO:0007669"/>
    <property type="project" value="UniProtKB-UniRule"/>
</dbReference>
<dbReference type="FunFam" id="3.30.1370.30:FF:000002">
    <property type="entry name" value="30S ribosomal protein S8"/>
    <property type="match status" value="1"/>
</dbReference>
<dbReference type="FunFam" id="3.30.1490.10:FF:000001">
    <property type="entry name" value="30S ribosomal protein S8"/>
    <property type="match status" value="1"/>
</dbReference>
<dbReference type="Gene3D" id="3.30.1370.30">
    <property type="match status" value="1"/>
</dbReference>
<dbReference type="Gene3D" id="3.30.1490.10">
    <property type="match status" value="1"/>
</dbReference>
<dbReference type="HAMAP" id="MF_01302_B">
    <property type="entry name" value="Ribosomal_uS8_B"/>
    <property type="match status" value="1"/>
</dbReference>
<dbReference type="InterPro" id="IPR000630">
    <property type="entry name" value="Ribosomal_uS8"/>
</dbReference>
<dbReference type="InterPro" id="IPR035987">
    <property type="entry name" value="Ribosomal_uS8_sf"/>
</dbReference>
<dbReference type="NCBIfam" id="NF001109">
    <property type="entry name" value="PRK00136.1"/>
    <property type="match status" value="1"/>
</dbReference>
<dbReference type="PANTHER" id="PTHR11758">
    <property type="entry name" value="40S RIBOSOMAL PROTEIN S15A"/>
    <property type="match status" value="1"/>
</dbReference>
<dbReference type="Pfam" id="PF00410">
    <property type="entry name" value="Ribosomal_S8"/>
    <property type="match status" value="1"/>
</dbReference>
<dbReference type="SUPFAM" id="SSF56047">
    <property type="entry name" value="Ribosomal protein S8"/>
    <property type="match status" value="1"/>
</dbReference>
<protein>
    <recommendedName>
        <fullName evidence="1">Small ribosomal subunit protein uS8</fullName>
    </recommendedName>
    <alternativeName>
        <fullName evidence="2">30S ribosomal protein S8</fullName>
    </alternativeName>
</protein>
<name>RS8_ACIC5</name>
<sequence>MSLTDPVADFLTRIRNAIRARHQKLDVPASKLKAEIARILKEEGYIANYKTTEEEGRAILRVYLKYGSNNEAAIRDLSRVSRPGCRVYIGRDEIKRVQGGLGISIMTTPRGVMTGRQARREGVGGEILCEVW</sequence>
<comment type="function">
    <text evidence="1">One of the primary rRNA binding proteins, it binds directly to 16S rRNA central domain where it helps coordinate assembly of the platform of the 30S subunit.</text>
</comment>
<comment type="subunit">
    <text evidence="1">Part of the 30S ribosomal subunit. Contacts proteins S5 and S12.</text>
</comment>
<comment type="similarity">
    <text evidence="1">Belongs to the universal ribosomal protein uS8 family.</text>
</comment>
<organism>
    <name type="scientific">Acidobacterium capsulatum (strain ATCC 51196 / DSM 11244 / BCRC 80197 / JCM 7670 / NBRC 15755 / NCIMB 13165 / 161)</name>
    <dbReference type="NCBI Taxonomy" id="240015"/>
    <lineage>
        <taxon>Bacteria</taxon>
        <taxon>Pseudomonadati</taxon>
        <taxon>Acidobacteriota</taxon>
        <taxon>Terriglobia</taxon>
        <taxon>Terriglobales</taxon>
        <taxon>Acidobacteriaceae</taxon>
        <taxon>Acidobacterium</taxon>
    </lineage>
</organism>